<dbReference type="EMBL" id="CP000781">
    <property type="protein sequence ID" value="ABS67223.1"/>
    <property type="molecule type" value="Genomic_DNA"/>
</dbReference>
<dbReference type="SMR" id="A7IGT0"/>
<dbReference type="STRING" id="78245.Xaut_1979"/>
<dbReference type="KEGG" id="xau:Xaut_1979"/>
<dbReference type="eggNOG" id="COG0356">
    <property type="taxonomic scope" value="Bacteria"/>
</dbReference>
<dbReference type="HOGENOM" id="CLU_041018_0_2_5"/>
<dbReference type="OrthoDB" id="9809130at2"/>
<dbReference type="PhylomeDB" id="A7IGT0"/>
<dbReference type="Proteomes" id="UP000002417">
    <property type="component" value="Chromosome"/>
</dbReference>
<dbReference type="GO" id="GO:0005886">
    <property type="term" value="C:plasma membrane"/>
    <property type="evidence" value="ECO:0007669"/>
    <property type="project" value="UniProtKB-SubCell"/>
</dbReference>
<dbReference type="GO" id="GO:0045259">
    <property type="term" value="C:proton-transporting ATP synthase complex"/>
    <property type="evidence" value="ECO:0007669"/>
    <property type="project" value="UniProtKB-KW"/>
</dbReference>
<dbReference type="GO" id="GO:0046933">
    <property type="term" value="F:proton-transporting ATP synthase activity, rotational mechanism"/>
    <property type="evidence" value="ECO:0007669"/>
    <property type="project" value="UniProtKB-UniRule"/>
</dbReference>
<dbReference type="CDD" id="cd00310">
    <property type="entry name" value="ATP-synt_Fo_a_6"/>
    <property type="match status" value="1"/>
</dbReference>
<dbReference type="FunFam" id="1.20.120.220:FF:000003">
    <property type="entry name" value="ATP synthase subunit a"/>
    <property type="match status" value="1"/>
</dbReference>
<dbReference type="Gene3D" id="1.20.120.220">
    <property type="entry name" value="ATP synthase, F0 complex, subunit A"/>
    <property type="match status" value="1"/>
</dbReference>
<dbReference type="HAMAP" id="MF_01393">
    <property type="entry name" value="ATP_synth_a_bact"/>
    <property type="match status" value="1"/>
</dbReference>
<dbReference type="InterPro" id="IPR000568">
    <property type="entry name" value="ATP_synth_F0_asu"/>
</dbReference>
<dbReference type="InterPro" id="IPR023011">
    <property type="entry name" value="ATP_synth_F0_asu_AS"/>
</dbReference>
<dbReference type="InterPro" id="IPR045083">
    <property type="entry name" value="ATP_synth_F0_asu_bact/mt"/>
</dbReference>
<dbReference type="InterPro" id="IPR035908">
    <property type="entry name" value="F0_ATP_A_sf"/>
</dbReference>
<dbReference type="NCBIfam" id="TIGR01131">
    <property type="entry name" value="ATP_synt_6_or_A"/>
    <property type="match status" value="1"/>
</dbReference>
<dbReference type="NCBIfam" id="NF004482">
    <property type="entry name" value="PRK05815.2-4"/>
    <property type="match status" value="1"/>
</dbReference>
<dbReference type="PANTHER" id="PTHR11410">
    <property type="entry name" value="ATP SYNTHASE SUBUNIT A"/>
    <property type="match status" value="1"/>
</dbReference>
<dbReference type="PANTHER" id="PTHR11410:SF0">
    <property type="entry name" value="ATP SYNTHASE SUBUNIT A"/>
    <property type="match status" value="1"/>
</dbReference>
<dbReference type="Pfam" id="PF00119">
    <property type="entry name" value="ATP-synt_A"/>
    <property type="match status" value="1"/>
</dbReference>
<dbReference type="PRINTS" id="PR00123">
    <property type="entry name" value="ATPASEA"/>
</dbReference>
<dbReference type="SUPFAM" id="SSF81336">
    <property type="entry name" value="F1F0 ATP synthase subunit A"/>
    <property type="match status" value="1"/>
</dbReference>
<dbReference type="PROSITE" id="PS00449">
    <property type="entry name" value="ATPASE_A"/>
    <property type="match status" value="1"/>
</dbReference>
<sequence length="250" mass="27394">MTVDPIHQFEIKRYVDLLNFGGVQFSFTNAALFMFGIVAIIFFFLTFATRGRTLVPGRAQSAAEMSYEFIAKMVRDSAGSEGMVFFPLVFSLFTFVLVSNVVGLIPYTFTVTAHLIVTAAMALLVIGTVIVYGFVRHGTHFLHLFVPSGVPAFLLPFLVVIEVVSFLSRPISLSLRLFANMLAGHIALKVFAFFVVGLASAGVVGWFGATLPFFMIVALYALELLVAMLQAYVFAVLTSIYLNDAIHPGH</sequence>
<comment type="function">
    <text evidence="1">Key component of the proton channel; it plays a direct role in the translocation of protons across the membrane.</text>
</comment>
<comment type="subunit">
    <text evidence="1">F-type ATPases have 2 components, CF(1) - the catalytic core - and CF(0) - the membrane proton channel. CF(1) has five subunits: alpha(3), beta(3), gamma(1), delta(1), epsilon(1). CF(0) has three main subunits: a(1), b(2) and c(9-12). The alpha and beta chains form an alternating ring which encloses part of the gamma chain. CF(1) is attached to CF(0) by a central stalk formed by the gamma and epsilon chains, while a peripheral stalk is formed by the delta and b chains.</text>
</comment>
<comment type="subcellular location">
    <subcellularLocation>
        <location evidence="1">Cell inner membrane</location>
        <topology evidence="1">Multi-pass membrane protein</topology>
    </subcellularLocation>
</comment>
<comment type="similarity">
    <text evidence="1">Belongs to the ATPase A chain family.</text>
</comment>
<proteinExistence type="inferred from homology"/>
<reference key="1">
    <citation type="submission" date="2007-07" db="EMBL/GenBank/DDBJ databases">
        <title>Complete sequence of chromosome of Xanthobacter autotrophicus Py2.</title>
        <authorList>
            <consortium name="US DOE Joint Genome Institute"/>
            <person name="Copeland A."/>
            <person name="Lucas S."/>
            <person name="Lapidus A."/>
            <person name="Barry K."/>
            <person name="Glavina del Rio T."/>
            <person name="Hammon N."/>
            <person name="Israni S."/>
            <person name="Dalin E."/>
            <person name="Tice H."/>
            <person name="Pitluck S."/>
            <person name="Sims D."/>
            <person name="Brettin T."/>
            <person name="Bruce D."/>
            <person name="Detter J.C."/>
            <person name="Han C."/>
            <person name="Tapia R."/>
            <person name="Brainard J."/>
            <person name="Schmutz J."/>
            <person name="Larimer F."/>
            <person name="Land M."/>
            <person name="Hauser L."/>
            <person name="Kyrpides N."/>
            <person name="Kim E."/>
            <person name="Ensigns S.A."/>
            <person name="Richardson P."/>
        </authorList>
    </citation>
    <scope>NUCLEOTIDE SEQUENCE [LARGE SCALE GENOMIC DNA]</scope>
    <source>
        <strain>ATCC BAA-1158 / Py2</strain>
    </source>
</reference>
<accession>A7IGT0</accession>
<protein>
    <recommendedName>
        <fullName evidence="1">ATP synthase subunit a</fullName>
    </recommendedName>
    <alternativeName>
        <fullName evidence="1">ATP synthase F0 sector subunit a</fullName>
    </alternativeName>
    <alternativeName>
        <fullName evidence="1">F-ATPase subunit 6</fullName>
    </alternativeName>
</protein>
<name>ATP6_XANP2</name>
<gene>
    <name evidence="1" type="primary">atpB</name>
    <name type="ordered locus">Xaut_1979</name>
</gene>
<keyword id="KW-0066">ATP synthesis</keyword>
<keyword id="KW-0997">Cell inner membrane</keyword>
<keyword id="KW-1003">Cell membrane</keyword>
<keyword id="KW-0138">CF(0)</keyword>
<keyword id="KW-0375">Hydrogen ion transport</keyword>
<keyword id="KW-0406">Ion transport</keyword>
<keyword id="KW-0472">Membrane</keyword>
<keyword id="KW-1185">Reference proteome</keyword>
<keyword id="KW-0812">Transmembrane</keyword>
<keyword id="KW-1133">Transmembrane helix</keyword>
<keyword id="KW-0813">Transport</keyword>
<organism>
    <name type="scientific">Xanthobacter autotrophicus (strain ATCC BAA-1158 / Py2)</name>
    <dbReference type="NCBI Taxonomy" id="78245"/>
    <lineage>
        <taxon>Bacteria</taxon>
        <taxon>Pseudomonadati</taxon>
        <taxon>Pseudomonadota</taxon>
        <taxon>Alphaproteobacteria</taxon>
        <taxon>Hyphomicrobiales</taxon>
        <taxon>Xanthobacteraceae</taxon>
        <taxon>Xanthobacter</taxon>
    </lineage>
</organism>
<feature type="chain" id="PRO_0000362511" description="ATP synthase subunit a">
    <location>
        <begin position="1"/>
        <end position="250"/>
    </location>
</feature>
<feature type="transmembrane region" description="Helical" evidence="1">
    <location>
        <begin position="27"/>
        <end position="47"/>
    </location>
</feature>
<feature type="transmembrane region" description="Helical" evidence="1">
    <location>
        <begin position="85"/>
        <end position="105"/>
    </location>
</feature>
<feature type="transmembrane region" description="Helical" evidence="1">
    <location>
        <begin position="115"/>
        <end position="135"/>
    </location>
</feature>
<feature type="transmembrane region" description="Helical" evidence="1">
    <location>
        <begin position="141"/>
        <end position="161"/>
    </location>
</feature>
<feature type="transmembrane region" description="Helical" evidence="1">
    <location>
        <begin position="181"/>
        <end position="201"/>
    </location>
</feature>
<feature type="transmembrane region" description="Helical" evidence="1">
    <location>
        <begin position="223"/>
        <end position="243"/>
    </location>
</feature>
<evidence type="ECO:0000255" key="1">
    <source>
        <dbReference type="HAMAP-Rule" id="MF_01393"/>
    </source>
</evidence>